<accession>B0SDK7</accession>
<organism>
    <name type="scientific">Leptospira biflexa serovar Patoc (strain Patoc 1 / Ames)</name>
    <dbReference type="NCBI Taxonomy" id="355278"/>
    <lineage>
        <taxon>Bacteria</taxon>
        <taxon>Pseudomonadati</taxon>
        <taxon>Spirochaetota</taxon>
        <taxon>Spirochaetia</taxon>
        <taxon>Leptospirales</taxon>
        <taxon>Leptospiraceae</taxon>
        <taxon>Leptospira</taxon>
    </lineage>
</organism>
<protein>
    <recommendedName>
        <fullName evidence="1">Acyl carrier protein</fullName>
        <shortName evidence="1">ACP</shortName>
    </recommendedName>
</protein>
<proteinExistence type="inferred from homology"/>
<dbReference type="EMBL" id="CP000777">
    <property type="protein sequence ID" value="ABZ94991.1"/>
    <property type="molecule type" value="Genomic_DNA"/>
</dbReference>
<dbReference type="RefSeq" id="WP_002974954.1">
    <property type="nucleotide sequence ID" value="NC_010842.1"/>
</dbReference>
<dbReference type="SMR" id="B0SDK7"/>
<dbReference type="GeneID" id="93342018"/>
<dbReference type="KEGG" id="lbf:LBF_2505"/>
<dbReference type="HOGENOM" id="CLU_108696_5_1_12"/>
<dbReference type="UniPathway" id="UPA00094"/>
<dbReference type="GO" id="GO:0005829">
    <property type="term" value="C:cytosol"/>
    <property type="evidence" value="ECO:0007669"/>
    <property type="project" value="TreeGrafter"/>
</dbReference>
<dbReference type="GO" id="GO:0016020">
    <property type="term" value="C:membrane"/>
    <property type="evidence" value="ECO:0007669"/>
    <property type="project" value="GOC"/>
</dbReference>
<dbReference type="GO" id="GO:0000035">
    <property type="term" value="F:acyl binding"/>
    <property type="evidence" value="ECO:0007669"/>
    <property type="project" value="TreeGrafter"/>
</dbReference>
<dbReference type="GO" id="GO:0000036">
    <property type="term" value="F:acyl carrier activity"/>
    <property type="evidence" value="ECO:0007669"/>
    <property type="project" value="UniProtKB-UniRule"/>
</dbReference>
<dbReference type="GO" id="GO:0009245">
    <property type="term" value="P:lipid A biosynthetic process"/>
    <property type="evidence" value="ECO:0007669"/>
    <property type="project" value="TreeGrafter"/>
</dbReference>
<dbReference type="FunFam" id="1.10.1200.10:FF:000006">
    <property type="entry name" value="Acyl carrier protein"/>
    <property type="match status" value="1"/>
</dbReference>
<dbReference type="Gene3D" id="1.10.1200.10">
    <property type="entry name" value="ACP-like"/>
    <property type="match status" value="1"/>
</dbReference>
<dbReference type="HAMAP" id="MF_01217">
    <property type="entry name" value="Acyl_carrier"/>
    <property type="match status" value="1"/>
</dbReference>
<dbReference type="InterPro" id="IPR003231">
    <property type="entry name" value="ACP"/>
</dbReference>
<dbReference type="InterPro" id="IPR036736">
    <property type="entry name" value="ACP-like_sf"/>
</dbReference>
<dbReference type="InterPro" id="IPR009081">
    <property type="entry name" value="PP-bd_ACP"/>
</dbReference>
<dbReference type="InterPro" id="IPR006162">
    <property type="entry name" value="Ppantetheine_attach_site"/>
</dbReference>
<dbReference type="NCBIfam" id="TIGR00517">
    <property type="entry name" value="acyl_carrier"/>
    <property type="match status" value="1"/>
</dbReference>
<dbReference type="NCBIfam" id="NF002148">
    <property type="entry name" value="PRK00982.1-2"/>
    <property type="match status" value="1"/>
</dbReference>
<dbReference type="NCBIfam" id="NF002149">
    <property type="entry name" value="PRK00982.1-3"/>
    <property type="match status" value="1"/>
</dbReference>
<dbReference type="NCBIfam" id="NF002150">
    <property type="entry name" value="PRK00982.1-4"/>
    <property type="match status" value="1"/>
</dbReference>
<dbReference type="NCBIfam" id="NF002151">
    <property type="entry name" value="PRK00982.1-5"/>
    <property type="match status" value="1"/>
</dbReference>
<dbReference type="PANTHER" id="PTHR20863">
    <property type="entry name" value="ACYL CARRIER PROTEIN"/>
    <property type="match status" value="1"/>
</dbReference>
<dbReference type="PANTHER" id="PTHR20863:SF76">
    <property type="entry name" value="CARRIER DOMAIN-CONTAINING PROTEIN"/>
    <property type="match status" value="1"/>
</dbReference>
<dbReference type="Pfam" id="PF00550">
    <property type="entry name" value="PP-binding"/>
    <property type="match status" value="1"/>
</dbReference>
<dbReference type="SUPFAM" id="SSF47336">
    <property type="entry name" value="ACP-like"/>
    <property type="match status" value="1"/>
</dbReference>
<dbReference type="PROSITE" id="PS50075">
    <property type="entry name" value="CARRIER"/>
    <property type="match status" value="1"/>
</dbReference>
<dbReference type="PROSITE" id="PS00012">
    <property type="entry name" value="PHOSPHOPANTETHEINE"/>
    <property type="match status" value="1"/>
</dbReference>
<comment type="function">
    <text evidence="1">Carrier of the growing fatty acid chain in fatty acid biosynthesis.</text>
</comment>
<comment type="pathway">
    <text evidence="1">Lipid metabolism; fatty acid biosynthesis.</text>
</comment>
<comment type="subcellular location">
    <subcellularLocation>
        <location evidence="1">Cytoplasm</location>
    </subcellularLocation>
</comment>
<comment type="PTM">
    <text evidence="1">4'-phosphopantetheine is transferred from CoA to a specific serine of apo-ACP by AcpS. This modification is essential for activity because fatty acids are bound in thioester linkage to the sulfhydryl of the prosthetic group.</text>
</comment>
<comment type="similarity">
    <text evidence="1">Belongs to the acyl carrier protein (ACP) family.</text>
</comment>
<sequence>MADFEKIKSIIVEQLGVDESEVTPEAHFINDLGADSLDTVELVMALEEEFGVEISDEDAEKIQTVGDVIKFIDKLKG</sequence>
<gene>
    <name evidence="1" type="primary">acpP</name>
    <name type="ordered locus">LBF_2505</name>
</gene>
<evidence type="ECO:0000255" key="1">
    <source>
        <dbReference type="HAMAP-Rule" id="MF_01217"/>
    </source>
</evidence>
<evidence type="ECO:0000255" key="2">
    <source>
        <dbReference type="PROSITE-ProRule" id="PRU00258"/>
    </source>
</evidence>
<keyword id="KW-0963">Cytoplasm</keyword>
<keyword id="KW-0275">Fatty acid biosynthesis</keyword>
<keyword id="KW-0276">Fatty acid metabolism</keyword>
<keyword id="KW-0444">Lipid biosynthesis</keyword>
<keyword id="KW-0443">Lipid metabolism</keyword>
<keyword id="KW-0596">Phosphopantetheine</keyword>
<keyword id="KW-0597">Phosphoprotein</keyword>
<reference key="1">
    <citation type="journal article" date="2008" name="PLoS ONE">
        <title>Genome sequence of the saprophyte Leptospira biflexa provides insights into the evolution of Leptospira and the pathogenesis of leptospirosis.</title>
        <authorList>
            <person name="Picardeau M."/>
            <person name="Bulach D.M."/>
            <person name="Bouchier C."/>
            <person name="Zuerner R.L."/>
            <person name="Zidane N."/>
            <person name="Wilson P.J."/>
            <person name="Creno S."/>
            <person name="Kuczek E.S."/>
            <person name="Bommezzadri S."/>
            <person name="Davis J.C."/>
            <person name="McGrath A."/>
            <person name="Johnson M.J."/>
            <person name="Boursaux-Eude C."/>
            <person name="Seemann T."/>
            <person name="Rouy Z."/>
            <person name="Coppel R.L."/>
            <person name="Rood J.I."/>
            <person name="Lajus A."/>
            <person name="Davies J.K."/>
            <person name="Medigue C."/>
            <person name="Adler B."/>
        </authorList>
    </citation>
    <scope>NUCLEOTIDE SEQUENCE [LARGE SCALE GENOMIC DNA]</scope>
    <source>
        <strain>Patoc 1 / Ames</strain>
    </source>
</reference>
<feature type="chain" id="PRO_1000139038" description="Acyl carrier protein">
    <location>
        <begin position="1"/>
        <end position="77"/>
    </location>
</feature>
<feature type="domain" description="Carrier" evidence="2">
    <location>
        <begin position="1"/>
        <end position="76"/>
    </location>
</feature>
<feature type="modified residue" description="O-(pantetheine 4'-phosphoryl)serine" evidence="2">
    <location>
        <position position="36"/>
    </location>
</feature>
<name>ACP_LEPBA</name>